<organism>
    <name type="scientific">Geobacillus kaustophilus (strain HTA426)</name>
    <dbReference type="NCBI Taxonomy" id="235909"/>
    <lineage>
        <taxon>Bacteria</taxon>
        <taxon>Bacillati</taxon>
        <taxon>Bacillota</taxon>
        <taxon>Bacilli</taxon>
        <taxon>Bacillales</taxon>
        <taxon>Anoxybacillaceae</taxon>
        <taxon>Geobacillus</taxon>
        <taxon>Geobacillus thermoleovorans group</taxon>
    </lineage>
</organism>
<keyword id="KW-0326">Glycosidase</keyword>
<keyword id="KW-0378">Hydrolase</keyword>
<keyword id="KW-0456">Lyase</keyword>
<keyword id="KW-0464">Manganese</keyword>
<keyword id="KW-0479">Metal-binding</keyword>
<keyword id="KW-1185">Reference proteome</keyword>
<protein>
    <recommendedName>
        <fullName evidence="1">Pseudouridine-5'-phosphate glycosidase</fullName>
        <shortName evidence="1">PsiMP glycosidase</shortName>
        <ecNumber evidence="1">4.2.1.70</ecNumber>
    </recommendedName>
</protein>
<feature type="chain" id="PRO_0000390521" description="Pseudouridine-5'-phosphate glycosidase">
    <location>
        <begin position="1"/>
        <end position="301"/>
    </location>
</feature>
<feature type="active site" description="Proton donor" evidence="1">
    <location>
        <position position="25"/>
    </location>
</feature>
<feature type="active site" description="Nucleophile" evidence="1">
    <location>
        <position position="159"/>
    </location>
</feature>
<feature type="binding site" evidence="1">
    <location>
        <position position="86"/>
    </location>
    <ligand>
        <name>substrate</name>
    </ligand>
</feature>
<feature type="binding site" evidence="1">
    <location>
        <position position="106"/>
    </location>
    <ligand>
        <name>substrate</name>
    </ligand>
</feature>
<feature type="binding site" evidence="1">
    <location>
        <position position="138"/>
    </location>
    <ligand>
        <name>Mn(2+)</name>
        <dbReference type="ChEBI" id="CHEBI:29035"/>
    </ligand>
</feature>
<feature type="binding site" evidence="1">
    <location>
        <begin position="140"/>
        <end position="142"/>
    </location>
    <ligand>
        <name>substrate</name>
    </ligand>
</feature>
<reference key="1">
    <citation type="journal article" date="2004" name="Nucleic Acids Res.">
        <title>Thermoadaptation trait revealed by the genome sequence of thermophilic Geobacillus kaustophilus.</title>
        <authorList>
            <person name="Takami H."/>
            <person name="Takaki Y."/>
            <person name="Chee G.-J."/>
            <person name="Nishi S."/>
            <person name="Shimamura S."/>
            <person name="Suzuki H."/>
            <person name="Matsui S."/>
            <person name="Uchiyama I."/>
        </authorList>
    </citation>
    <scope>NUCLEOTIDE SEQUENCE [LARGE SCALE GENOMIC DNA]</scope>
    <source>
        <strain>HTA426</strain>
    </source>
</reference>
<comment type="function">
    <text evidence="1">Catalyzes the reversible cleavage of pseudouridine 5'-phosphate (PsiMP) to ribose 5-phosphate and uracil. Functions biologically in the cleavage direction, as part of a pseudouridine degradation pathway.</text>
</comment>
<comment type="catalytic activity">
    <reaction evidence="1">
        <text>D-ribose 5-phosphate + uracil = psi-UMP + H2O</text>
        <dbReference type="Rhea" id="RHEA:18337"/>
        <dbReference type="ChEBI" id="CHEBI:15377"/>
        <dbReference type="ChEBI" id="CHEBI:17568"/>
        <dbReference type="ChEBI" id="CHEBI:58380"/>
        <dbReference type="ChEBI" id="CHEBI:78346"/>
        <dbReference type="EC" id="4.2.1.70"/>
    </reaction>
</comment>
<comment type="cofactor">
    <cofactor evidence="1">
        <name>Mn(2+)</name>
        <dbReference type="ChEBI" id="CHEBI:29035"/>
    </cofactor>
    <text evidence="1">Binds 1 Mn(2+) ion per subunit.</text>
</comment>
<comment type="subunit">
    <text evidence="1">Homotrimer.</text>
</comment>
<comment type="similarity">
    <text evidence="1">Belongs to the pseudouridine-5'-phosphate glycosidase family.</text>
</comment>
<accession>Q5L078</accession>
<name>PSUG_GEOKA</name>
<gene>
    <name evidence="1" type="primary">psuG</name>
    <name type="ordered locus">GK1373</name>
</gene>
<evidence type="ECO:0000255" key="1">
    <source>
        <dbReference type="HAMAP-Rule" id="MF_01876"/>
    </source>
</evidence>
<proteinExistence type="inferred from homology"/>
<sequence length="301" mass="32599">MNDFLVFSEEVAQAKAEKKPIVALESTIISHGMPYPENVQTAKDVERIIRDRGAVPATIAIFNEKIKIGLTEGELEQLGTSHDVEKVSRRDLPYVVAMKKHGATTVAGTMICAEMAGIRVFATGGIGGVHRGAEQTMDISADLQELARTNVAVVCAGAKSILDLGLTLEYLETHGVPVIGYQTDVLPAFYSRTSPFRVDYRLDSAKEIAQFLETKWKLGLNGGVVIANPVPKEEELEESYITAIIEQALKEAEKQHITGKSVTPFLLDRVKTLTGGKSLQANIALVKNNAALAADLARELS</sequence>
<dbReference type="EC" id="4.2.1.70" evidence="1"/>
<dbReference type="EMBL" id="BA000043">
    <property type="protein sequence ID" value="BAD75658.1"/>
    <property type="molecule type" value="Genomic_DNA"/>
</dbReference>
<dbReference type="RefSeq" id="WP_011230870.1">
    <property type="nucleotide sequence ID" value="NC_006510.1"/>
</dbReference>
<dbReference type="SMR" id="Q5L078"/>
<dbReference type="STRING" id="235909.GK1373"/>
<dbReference type="KEGG" id="gka:GK1373"/>
<dbReference type="PATRIC" id="fig|235909.7.peg.1485"/>
<dbReference type="eggNOG" id="COG2313">
    <property type="taxonomic scope" value="Bacteria"/>
</dbReference>
<dbReference type="HOGENOM" id="CLU_012201_0_1_9"/>
<dbReference type="Proteomes" id="UP000001172">
    <property type="component" value="Chromosome"/>
</dbReference>
<dbReference type="GO" id="GO:0005737">
    <property type="term" value="C:cytoplasm"/>
    <property type="evidence" value="ECO:0007669"/>
    <property type="project" value="TreeGrafter"/>
</dbReference>
<dbReference type="GO" id="GO:0016798">
    <property type="term" value="F:hydrolase activity, acting on glycosyl bonds"/>
    <property type="evidence" value="ECO:0007669"/>
    <property type="project" value="UniProtKB-KW"/>
</dbReference>
<dbReference type="GO" id="GO:0046872">
    <property type="term" value="F:metal ion binding"/>
    <property type="evidence" value="ECO:0007669"/>
    <property type="project" value="UniProtKB-KW"/>
</dbReference>
<dbReference type="GO" id="GO:0004730">
    <property type="term" value="F:pseudouridylate synthase activity"/>
    <property type="evidence" value="ECO:0007669"/>
    <property type="project" value="UniProtKB-UniRule"/>
</dbReference>
<dbReference type="GO" id="GO:0046113">
    <property type="term" value="P:nucleobase catabolic process"/>
    <property type="evidence" value="ECO:0007669"/>
    <property type="project" value="UniProtKB-UniRule"/>
</dbReference>
<dbReference type="Gene3D" id="3.40.1790.10">
    <property type="entry name" value="Indigoidine synthase domain"/>
    <property type="match status" value="1"/>
</dbReference>
<dbReference type="HAMAP" id="MF_01876">
    <property type="entry name" value="PsiMP_glycosidase"/>
    <property type="match status" value="1"/>
</dbReference>
<dbReference type="InterPro" id="IPR022830">
    <property type="entry name" value="Indigdn_synthA-like"/>
</dbReference>
<dbReference type="InterPro" id="IPR007342">
    <property type="entry name" value="PsuG"/>
</dbReference>
<dbReference type="PANTHER" id="PTHR42909:SF1">
    <property type="entry name" value="CARBOHYDRATE KINASE PFKB DOMAIN-CONTAINING PROTEIN"/>
    <property type="match status" value="1"/>
</dbReference>
<dbReference type="PANTHER" id="PTHR42909">
    <property type="entry name" value="ZGC:136858"/>
    <property type="match status" value="1"/>
</dbReference>
<dbReference type="Pfam" id="PF04227">
    <property type="entry name" value="Indigoidine_A"/>
    <property type="match status" value="1"/>
</dbReference>
<dbReference type="SUPFAM" id="SSF110581">
    <property type="entry name" value="Indigoidine synthase A-like"/>
    <property type="match status" value="1"/>
</dbReference>